<name>SECA_BURTA</name>
<proteinExistence type="inferred from homology"/>
<evidence type="ECO:0000255" key="1">
    <source>
        <dbReference type="HAMAP-Rule" id="MF_01382"/>
    </source>
</evidence>
<sequence>MTTGFLQKIFGSRNQRLVKQYQKTVATINALETQIEKLTDDQLRGKTGEFRQRIAAGESLDKLLPEAFAVCREASRRVLKMRHFDVQMIGGMVLHYGKIAEMRTGEGKTLVATLAAYLNALAGRGVHVVTVNDYLAQRDAEWMGRLYNFLGLSVGINLSGMEHDQKQAAYAADITYGTNNEFGFDYLRDNMVYETDARVQRPLNFAVVDEVDSILIDEARTPLIISGQAEDHTELYVRMNALPPLLERQIGEEKADGTGVEKPGDYTLDEKGRQVFLTESGHEKAERMLAEWGLIGDGESLYAPQNITLMHHVYAALRAHTLFHRDQHYVVQNGEVIIVDEFTGRLMPGRRWSDGLHQAVEAKEHVKIQSENQTLASITFQNYFRMYAKLSGMTGTADTEAYEFNEIYGLETVVIPTNRPPKRIDKQDQIYKTAKERYDAVIRDIRECYERGQPVLVGTTSIENSELLSHLLKQAGLPHEVLNAKQHAREAAIVAEAGRPKRVTIATNMAGRGTDIVLGGNVEKQAAFIEADEAIPADEKARRIQQLHDEWETLHEQVKTAGGLHIIGTERHESRRIDNQLRGRAGRQGDPGSSRFYLSLEDPLLRIFAGDRVRAIMDRLKMPEGEAIEAGIVTRSIESAQRKVEARNFDIRKQLLEYDDVSNDQRKVIYQQRNELLEAHDIAETIGAMRHGVISEVVRQFVPAGSIEEQWDLPELEETLRNDWQLDLAIQEMVNESSSINADEILDAVTTAADEHYEAKVALVGRESFSAFERSIMLQTLDRLWREHLAALDHLRQGIHLRGYAQKNPKQEYKREAFELFAAMLDAVKQEVTRIVMNVQIQSPEQLEEAAEQIEEQGGQLGNVEFQHADFAAAAAASAGGAVVADATAEMVGHAMSHSGPAGEVPRVGRNDPCPCGSGKKYKHCHGKLS</sequence>
<gene>
    <name evidence="1" type="primary">secA</name>
    <name type="ordered locus">BTH_I1127</name>
</gene>
<dbReference type="EC" id="7.4.2.8" evidence="1"/>
<dbReference type="EMBL" id="CP000086">
    <property type="protein sequence ID" value="ABC38957.1"/>
    <property type="molecule type" value="Genomic_DNA"/>
</dbReference>
<dbReference type="RefSeq" id="WP_009888793.1">
    <property type="nucleotide sequence ID" value="NZ_CP008785.1"/>
</dbReference>
<dbReference type="SMR" id="Q2SZH4"/>
<dbReference type="GeneID" id="45120879"/>
<dbReference type="KEGG" id="bte:BTH_I1127"/>
<dbReference type="HOGENOM" id="CLU_005314_3_0_4"/>
<dbReference type="Proteomes" id="UP000001930">
    <property type="component" value="Chromosome I"/>
</dbReference>
<dbReference type="GO" id="GO:0031522">
    <property type="term" value="C:cell envelope Sec protein transport complex"/>
    <property type="evidence" value="ECO:0007669"/>
    <property type="project" value="TreeGrafter"/>
</dbReference>
<dbReference type="GO" id="GO:0005829">
    <property type="term" value="C:cytosol"/>
    <property type="evidence" value="ECO:0007669"/>
    <property type="project" value="TreeGrafter"/>
</dbReference>
<dbReference type="GO" id="GO:0005886">
    <property type="term" value="C:plasma membrane"/>
    <property type="evidence" value="ECO:0007669"/>
    <property type="project" value="UniProtKB-SubCell"/>
</dbReference>
<dbReference type="GO" id="GO:0005524">
    <property type="term" value="F:ATP binding"/>
    <property type="evidence" value="ECO:0007669"/>
    <property type="project" value="UniProtKB-UniRule"/>
</dbReference>
<dbReference type="GO" id="GO:0046872">
    <property type="term" value="F:metal ion binding"/>
    <property type="evidence" value="ECO:0007669"/>
    <property type="project" value="UniProtKB-KW"/>
</dbReference>
<dbReference type="GO" id="GO:0008564">
    <property type="term" value="F:protein-exporting ATPase activity"/>
    <property type="evidence" value="ECO:0007669"/>
    <property type="project" value="UniProtKB-EC"/>
</dbReference>
<dbReference type="GO" id="GO:0065002">
    <property type="term" value="P:intracellular protein transmembrane transport"/>
    <property type="evidence" value="ECO:0007669"/>
    <property type="project" value="UniProtKB-UniRule"/>
</dbReference>
<dbReference type="GO" id="GO:0017038">
    <property type="term" value="P:protein import"/>
    <property type="evidence" value="ECO:0007669"/>
    <property type="project" value="InterPro"/>
</dbReference>
<dbReference type="GO" id="GO:0006605">
    <property type="term" value="P:protein targeting"/>
    <property type="evidence" value="ECO:0007669"/>
    <property type="project" value="UniProtKB-UniRule"/>
</dbReference>
<dbReference type="GO" id="GO:0043952">
    <property type="term" value="P:protein transport by the Sec complex"/>
    <property type="evidence" value="ECO:0007669"/>
    <property type="project" value="TreeGrafter"/>
</dbReference>
<dbReference type="CDD" id="cd17928">
    <property type="entry name" value="DEXDc_SecA"/>
    <property type="match status" value="1"/>
</dbReference>
<dbReference type="CDD" id="cd18803">
    <property type="entry name" value="SF2_C_secA"/>
    <property type="match status" value="1"/>
</dbReference>
<dbReference type="FunFam" id="3.40.50.300:FF:000081">
    <property type="entry name" value="Preprotein translocase subunit SecA"/>
    <property type="match status" value="1"/>
</dbReference>
<dbReference type="FunFam" id="3.40.50.300:FF:000113">
    <property type="entry name" value="Preprotein translocase subunit SecA"/>
    <property type="match status" value="1"/>
</dbReference>
<dbReference type="FunFam" id="3.90.1440.10:FF:000001">
    <property type="entry name" value="Preprotein translocase subunit SecA"/>
    <property type="match status" value="1"/>
</dbReference>
<dbReference type="FunFam" id="1.10.3060.10:FF:000003">
    <property type="entry name" value="Protein translocase subunit SecA"/>
    <property type="match status" value="1"/>
</dbReference>
<dbReference type="Gene3D" id="1.10.3060.10">
    <property type="entry name" value="Helical scaffold and wing domains of SecA"/>
    <property type="match status" value="1"/>
</dbReference>
<dbReference type="Gene3D" id="3.40.50.300">
    <property type="entry name" value="P-loop containing nucleotide triphosphate hydrolases"/>
    <property type="match status" value="2"/>
</dbReference>
<dbReference type="Gene3D" id="3.90.1440.10">
    <property type="entry name" value="SecA, preprotein cross-linking domain"/>
    <property type="match status" value="1"/>
</dbReference>
<dbReference type="HAMAP" id="MF_01382">
    <property type="entry name" value="SecA"/>
    <property type="match status" value="1"/>
</dbReference>
<dbReference type="InterPro" id="IPR014001">
    <property type="entry name" value="Helicase_ATP-bd"/>
</dbReference>
<dbReference type="InterPro" id="IPR001650">
    <property type="entry name" value="Helicase_C-like"/>
</dbReference>
<dbReference type="InterPro" id="IPR027417">
    <property type="entry name" value="P-loop_NTPase"/>
</dbReference>
<dbReference type="InterPro" id="IPR004027">
    <property type="entry name" value="SEC_C_motif"/>
</dbReference>
<dbReference type="InterPro" id="IPR000185">
    <property type="entry name" value="SecA"/>
</dbReference>
<dbReference type="InterPro" id="IPR020937">
    <property type="entry name" value="SecA_CS"/>
</dbReference>
<dbReference type="InterPro" id="IPR011115">
    <property type="entry name" value="SecA_DEAD"/>
</dbReference>
<dbReference type="InterPro" id="IPR014018">
    <property type="entry name" value="SecA_motor_DEAD"/>
</dbReference>
<dbReference type="InterPro" id="IPR011130">
    <property type="entry name" value="SecA_preprotein_X-link_dom"/>
</dbReference>
<dbReference type="InterPro" id="IPR044722">
    <property type="entry name" value="SecA_SF2_C"/>
</dbReference>
<dbReference type="InterPro" id="IPR011116">
    <property type="entry name" value="SecA_Wing/Scaffold"/>
</dbReference>
<dbReference type="InterPro" id="IPR036266">
    <property type="entry name" value="SecA_Wing/Scaffold_sf"/>
</dbReference>
<dbReference type="InterPro" id="IPR036670">
    <property type="entry name" value="SecA_X-link_sf"/>
</dbReference>
<dbReference type="NCBIfam" id="NF009538">
    <property type="entry name" value="PRK12904.1"/>
    <property type="match status" value="1"/>
</dbReference>
<dbReference type="NCBIfam" id="TIGR00963">
    <property type="entry name" value="secA"/>
    <property type="match status" value="1"/>
</dbReference>
<dbReference type="PANTHER" id="PTHR30612:SF0">
    <property type="entry name" value="CHLOROPLAST PROTEIN-TRANSPORTING ATPASE"/>
    <property type="match status" value="1"/>
</dbReference>
<dbReference type="PANTHER" id="PTHR30612">
    <property type="entry name" value="SECA INNER MEMBRANE COMPONENT OF SEC PROTEIN SECRETION SYSTEM"/>
    <property type="match status" value="1"/>
</dbReference>
<dbReference type="Pfam" id="PF21090">
    <property type="entry name" value="P-loop_SecA"/>
    <property type="match status" value="1"/>
</dbReference>
<dbReference type="Pfam" id="PF02810">
    <property type="entry name" value="SEC-C"/>
    <property type="match status" value="1"/>
</dbReference>
<dbReference type="Pfam" id="PF07517">
    <property type="entry name" value="SecA_DEAD"/>
    <property type="match status" value="1"/>
</dbReference>
<dbReference type="Pfam" id="PF01043">
    <property type="entry name" value="SecA_PP_bind"/>
    <property type="match status" value="1"/>
</dbReference>
<dbReference type="Pfam" id="PF07516">
    <property type="entry name" value="SecA_SW"/>
    <property type="match status" value="1"/>
</dbReference>
<dbReference type="PRINTS" id="PR00906">
    <property type="entry name" value="SECA"/>
</dbReference>
<dbReference type="SMART" id="SM00957">
    <property type="entry name" value="SecA_DEAD"/>
    <property type="match status" value="1"/>
</dbReference>
<dbReference type="SMART" id="SM00958">
    <property type="entry name" value="SecA_PP_bind"/>
    <property type="match status" value="1"/>
</dbReference>
<dbReference type="SUPFAM" id="SSF81886">
    <property type="entry name" value="Helical scaffold and wing domains of SecA"/>
    <property type="match status" value="1"/>
</dbReference>
<dbReference type="SUPFAM" id="SSF52540">
    <property type="entry name" value="P-loop containing nucleoside triphosphate hydrolases"/>
    <property type="match status" value="2"/>
</dbReference>
<dbReference type="SUPFAM" id="SSF81767">
    <property type="entry name" value="Pre-protein crosslinking domain of SecA"/>
    <property type="match status" value="1"/>
</dbReference>
<dbReference type="PROSITE" id="PS01312">
    <property type="entry name" value="SECA"/>
    <property type="match status" value="1"/>
</dbReference>
<dbReference type="PROSITE" id="PS51196">
    <property type="entry name" value="SECA_MOTOR_DEAD"/>
    <property type="match status" value="1"/>
</dbReference>
<keyword id="KW-0067">ATP-binding</keyword>
<keyword id="KW-0997">Cell inner membrane</keyword>
<keyword id="KW-1003">Cell membrane</keyword>
<keyword id="KW-0963">Cytoplasm</keyword>
<keyword id="KW-0472">Membrane</keyword>
<keyword id="KW-0479">Metal-binding</keyword>
<keyword id="KW-0547">Nucleotide-binding</keyword>
<keyword id="KW-0653">Protein transport</keyword>
<keyword id="KW-1278">Translocase</keyword>
<keyword id="KW-0811">Translocation</keyword>
<keyword id="KW-0813">Transport</keyword>
<keyword id="KW-0862">Zinc</keyword>
<feature type="chain" id="PRO_0000320757" description="Protein translocase subunit SecA">
    <location>
        <begin position="1"/>
        <end position="930"/>
    </location>
</feature>
<feature type="binding site" evidence="1">
    <location>
        <position position="87"/>
    </location>
    <ligand>
        <name>ATP</name>
        <dbReference type="ChEBI" id="CHEBI:30616"/>
    </ligand>
</feature>
<feature type="binding site" evidence="1">
    <location>
        <begin position="105"/>
        <end position="109"/>
    </location>
    <ligand>
        <name>ATP</name>
        <dbReference type="ChEBI" id="CHEBI:30616"/>
    </ligand>
</feature>
<feature type="binding site" evidence="1">
    <location>
        <position position="515"/>
    </location>
    <ligand>
        <name>ATP</name>
        <dbReference type="ChEBI" id="CHEBI:30616"/>
    </ligand>
</feature>
<feature type="binding site" evidence="1">
    <location>
        <position position="914"/>
    </location>
    <ligand>
        <name>Zn(2+)</name>
        <dbReference type="ChEBI" id="CHEBI:29105"/>
    </ligand>
</feature>
<feature type="binding site" evidence="1">
    <location>
        <position position="916"/>
    </location>
    <ligand>
        <name>Zn(2+)</name>
        <dbReference type="ChEBI" id="CHEBI:29105"/>
    </ligand>
</feature>
<feature type="binding site" evidence="1">
    <location>
        <position position="925"/>
    </location>
    <ligand>
        <name>Zn(2+)</name>
        <dbReference type="ChEBI" id="CHEBI:29105"/>
    </ligand>
</feature>
<feature type="binding site" evidence="1">
    <location>
        <position position="926"/>
    </location>
    <ligand>
        <name>Zn(2+)</name>
        <dbReference type="ChEBI" id="CHEBI:29105"/>
    </ligand>
</feature>
<accession>Q2SZH4</accession>
<protein>
    <recommendedName>
        <fullName evidence="1">Protein translocase subunit SecA</fullName>
        <ecNumber evidence="1">7.4.2.8</ecNumber>
    </recommendedName>
</protein>
<reference key="1">
    <citation type="journal article" date="2005" name="BMC Genomics">
        <title>Bacterial genome adaptation to niches: divergence of the potential virulence genes in three Burkholderia species of different survival strategies.</title>
        <authorList>
            <person name="Kim H.S."/>
            <person name="Schell M.A."/>
            <person name="Yu Y."/>
            <person name="Ulrich R.L."/>
            <person name="Sarria S.H."/>
            <person name="Nierman W.C."/>
            <person name="DeShazer D."/>
        </authorList>
    </citation>
    <scope>NUCLEOTIDE SEQUENCE [LARGE SCALE GENOMIC DNA]</scope>
    <source>
        <strain>ATCC 700388 / DSM 13276 / CCUG 48851 / CIP 106301 / E264</strain>
    </source>
</reference>
<comment type="function">
    <text evidence="1">Part of the Sec protein translocase complex. Interacts with the SecYEG preprotein conducting channel. Has a central role in coupling the hydrolysis of ATP to the transfer of proteins into and across the cell membrane, serving both as a receptor for the preprotein-SecB complex and as an ATP-driven molecular motor driving the stepwise translocation of polypeptide chains across the membrane.</text>
</comment>
<comment type="catalytic activity">
    <reaction evidence="1">
        <text>ATP + H2O + cellular proteinSide 1 = ADP + phosphate + cellular proteinSide 2.</text>
        <dbReference type="EC" id="7.4.2.8"/>
    </reaction>
</comment>
<comment type="cofactor">
    <cofactor evidence="1">
        <name>Zn(2+)</name>
        <dbReference type="ChEBI" id="CHEBI:29105"/>
    </cofactor>
    <text evidence="1">May bind 1 zinc ion per subunit.</text>
</comment>
<comment type="subunit">
    <text evidence="1">Monomer and homodimer. Part of the essential Sec protein translocation apparatus which comprises SecA, SecYEG and auxiliary proteins SecDF-YajC and YidC.</text>
</comment>
<comment type="subcellular location">
    <subcellularLocation>
        <location evidence="1">Cell inner membrane</location>
        <topology evidence="1">Peripheral membrane protein</topology>
        <orientation evidence="1">Cytoplasmic side</orientation>
    </subcellularLocation>
    <subcellularLocation>
        <location evidence="1">Cytoplasm</location>
    </subcellularLocation>
    <text evidence="1">Distribution is 50-50.</text>
</comment>
<comment type="similarity">
    <text evidence="1">Belongs to the SecA family.</text>
</comment>
<organism>
    <name type="scientific">Burkholderia thailandensis (strain ATCC 700388 / DSM 13276 / CCUG 48851 / CIP 106301 / E264)</name>
    <dbReference type="NCBI Taxonomy" id="271848"/>
    <lineage>
        <taxon>Bacteria</taxon>
        <taxon>Pseudomonadati</taxon>
        <taxon>Pseudomonadota</taxon>
        <taxon>Betaproteobacteria</taxon>
        <taxon>Burkholderiales</taxon>
        <taxon>Burkholderiaceae</taxon>
        <taxon>Burkholderia</taxon>
        <taxon>pseudomallei group</taxon>
    </lineage>
</organism>